<feature type="chain" id="PRO_0000329047" description="Unconventional myosin-VIIb">
    <location>
        <begin position="1"/>
        <end position="2113"/>
    </location>
</feature>
<feature type="domain" description="Myosin motor" evidence="6">
    <location>
        <begin position="65"/>
        <end position="760"/>
    </location>
</feature>
<feature type="domain" description="IQ 1" evidence="3">
    <location>
        <begin position="745"/>
        <end position="765"/>
    </location>
</feature>
<feature type="domain" description="IQ 2" evidence="3">
    <location>
        <begin position="763"/>
        <end position="792"/>
    </location>
</feature>
<feature type="domain" description="IQ 3" evidence="3">
    <location>
        <begin position="786"/>
        <end position="815"/>
    </location>
</feature>
<feature type="domain" description="IQ 4" evidence="3">
    <location>
        <begin position="809"/>
        <end position="838"/>
    </location>
</feature>
<feature type="domain" description="IQ 5" evidence="3">
    <location>
        <begin position="832"/>
        <end position="861"/>
    </location>
</feature>
<feature type="domain" description="IQ 6" evidence="3">
    <location>
        <begin position="855"/>
        <end position="884"/>
    </location>
</feature>
<feature type="domain" description="MyTH4 1" evidence="5">
    <location>
        <begin position="989"/>
        <end position="1189"/>
    </location>
</feature>
<feature type="domain" description="FERM 1" evidence="2">
    <location>
        <begin position="1194"/>
        <end position="1503"/>
    </location>
</feature>
<feature type="domain" description="SH3" evidence="4">
    <location>
        <begin position="1498"/>
        <end position="1564"/>
    </location>
</feature>
<feature type="domain" description="MyTH4 2" evidence="5">
    <location>
        <begin position="1641"/>
        <end position="1790"/>
    </location>
</feature>
<feature type="domain" description="MyTH4 3" evidence="5">
    <location>
        <begin position="1790"/>
        <end position="1896"/>
    </location>
</feature>
<feature type="domain" description="FERM 2" evidence="2">
    <location>
        <begin position="1796"/>
        <end position="2099"/>
    </location>
</feature>
<feature type="region of interest" description="Actin-binding" evidence="6">
    <location>
        <begin position="637"/>
        <end position="659"/>
    </location>
</feature>
<feature type="region of interest" description="Mediates interaction with ANKS4B" evidence="9">
    <location>
        <begin position="962"/>
        <end position="1578"/>
    </location>
</feature>
<feature type="region of interest" description="Mediates interaction with CDHR2, CDHR5 and USH1C" evidence="1">
    <location>
        <begin position="1497"/>
        <end position="2113"/>
    </location>
</feature>
<feature type="binding site" evidence="6">
    <location>
        <begin position="158"/>
        <end position="165"/>
    </location>
    <ligand>
        <name>ATP</name>
        <dbReference type="ChEBI" id="CHEBI:30616"/>
    </ligand>
</feature>
<feature type="modified residue" description="Phosphoserine" evidence="14">
    <location>
        <position position="904"/>
    </location>
</feature>
<feature type="modified residue" description="Phosphothreonine" evidence="14">
    <location>
        <position position="1339"/>
    </location>
</feature>
<feature type="modified residue" description="Phosphoserine" evidence="14">
    <location>
        <position position="1368"/>
    </location>
</feature>
<feature type="modified residue" description="Phosphoserine" evidence="14">
    <location>
        <position position="1642"/>
    </location>
</feature>
<feature type="sequence conflict" description="In Ref. 1; AAK28339." evidence="11" ref="1">
    <original>IE</original>
    <variation>LA</variation>
    <location>
        <begin position="227"/>
        <end position="228"/>
    </location>
</feature>
<feature type="sequence conflict" description="In Ref. 1; AAK28339." evidence="11" ref="1">
    <original>L</original>
    <variation>V</variation>
    <location>
        <position position="2033"/>
    </location>
</feature>
<feature type="helix" evidence="15">
    <location>
        <begin position="973"/>
        <end position="980"/>
    </location>
</feature>
<feature type="helix" evidence="15">
    <location>
        <begin position="1006"/>
        <end position="1020"/>
    </location>
</feature>
<feature type="helix" evidence="15">
    <location>
        <begin position="1086"/>
        <end position="1099"/>
    </location>
</feature>
<feature type="helix" evidence="15">
    <location>
        <begin position="1103"/>
        <end position="1115"/>
    </location>
</feature>
<feature type="helix" evidence="15">
    <location>
        <begin position="1121"/>
        <end position="1137"/>
    </location>
</feature>
<feature type="turn" evidence="15">
    <location>
        <begin position="1142"/>
        <end position="1144"/>
    </location>
</feature>
<feature type="helix" evidence="15">
    <location>
        <begin position="1145"/>
        <end position="1153"/>
    </location>
</feature>
<feature type="turn" evidence="15">
    <location>
        <begin position="1157"/>
        <end position="1159"/>
    </location>
</feature>
<feature type="helix" evidence="15">
    <location>
        <begin position="1160"/>
        <end position="1173"/>
    </location>
</feature>
<feature type="helix" evidence="15">
    <location>
        <begin position="1182"/>
        <end position="1190"/>
    </location>
</feature>
<feature type="strand" evidence="15">
    <location>
        <begin position="1194"/>
        <end position="1200"/>
    </location>
</feature>
<feature type="strand" evidence="15">
    <location>
        <begin position="1205"/>
        <end position="1210"/>
    </location>
</feature>
<feature type="helix" evidence="15">
    <location>
        <begin position="1216"/>
        <end position="1227"/>
    </location>
</feature>
<feature type="strand" evidence="15">
    <location>
        <begin position="1235"/>
        <end position="1241"/>
    </location>
</feature>
<feature type="strand" evidence="15">
    <location>
        <begin position="1244"/>
        <end position="1247"/>
    </location>
</feature>
<feature type="turn" evidence="15">
    <location>
        <begin position="1249"/>
        <end position="1252"/>
    </location>
</feature>
<feature type="helix" evidence="15">
    <location>
        <begin position="1255"/>
        <end position="1269"/>
    </location>
</feature>
<feature type="turn" evidence="15">
    <location>
        <begin position="1273"/>
        <end position="1275"/>
    </location>
</feature>
<feature type="strand" evidence="15">
    <location>
        <begin position="1278"/>
        <end position="1284"/>
    </location>
</feature>
<feature type="helix" evidence="15">
    <location>
        <begin position="1297"/>
        <end position="1313"/>
    </location>
</feature>
<feature type="strand" evidence="15">
    <location>
        <begin position="1314"/>
        <end position="1316"/>
    </location>
</feature>
<feature type="helix" evidence="15">
    <location>
        <begin position="1321"/>
        <end position="1335"/>
    </location>
</feature>
<feature type="helix" evidence="15">
    <location>
        <begin position="1342"/>
        <end position="1352"/>
    </location>
</feature>
<feature type="helix" evidence="15">
    <location>
        <begin position="1355"/>
        <end position="1358"/>
    </location>
</feature>
<feature type="helix" evidence="15">
    <location>
        <begin position="1363"/>
        <end position="1377"/>
    </location>
</feature>
<feature type="turn" evidence="15">
    <location>
        <begin position="1378"/>
        <end position="1380"/>
    </location>
</feature>
<feature type="helix" evidence="15">
    <location>
        <begin position="1386"/>
        <end position="1400"/>
    </location>
</feature>
<feature type="turn" evidence="15">
    <location>
        <begin position="1402"/>
        <end position="1405"/>
    </location>
</feature>
<feature type="strand" evidence="15">
    <location>
        <begin position="1406"/>
        <end position="1415"/>
    </location>
</feature>
<feature type="strand" evidence="15">
    <location>
        <begin position="1422"/>
        <end position="1428"/>
    </location>
</feature>
<feature type="strand" evidence="15">
    <location>
        <begin position="1433"/>
        <end position="1436"/>
    </location>
</feature>
<feature type="strand" evidence="15">
    <location>
        <begin position="1442"/>
        <end position="1446"/>
    </location>
</feature>
<feature type="helix" evidence="15">
    <location>
        <begin position="1448"/>
        <end position="1450"/>
    </location>
</feature>
<feature type="strand" evidence="15">
    <location>
        <begin position="1451"/>
        <end position="1456"/>
    </location>
</feature>
<feature type="strand" evidence="15">
    <location>
        <begin position="1465"/>
        <end position="1472"/>
    </location>
</feature>
<feature type="strand" evidence="15">
    <location>
        <begin position="1474"/>
        <end position="1478"/>
    </location>
</feature>
<feature type="helix" evidence="15">
    <location>
        <begin position="1482"/>
        <end position="1499"/>
    </location>
</feature>
<feature type="strand" evidence="15">
    <location>
        <begin position="1502"/>
        <end position="1505"/>
    </location>
</feature>
<feature type="strand" evidence="15">
    <location>
        <begin position="1525"/>
        <end position="1527"/>
    </location>
</feature>
<feature type="strand" evidence="15">
    <location>
        <begin position="1537"/>
        <end position="1545"/>
    </location>
</feature>
<feature type="turn" evidence="15">
    <location>
        <begin position="1546"/>
        <end position="1548"/>
    </location>
</feature>
<feature type="strand" evidence="15">
    <location>
        <begin position="1551"/>
        <end position="1555"/>
    </location>
</feature>
<feature type="helix" evidence="15">
    <location>
        <begin position="1556"/>
        <end position="1558"/>
    </location>
</feature>
<feature type="strand" evidence="15">
    <location>
        <begin position="1559"/>
        <end position="1561"/>
    </location>
</feature>
<feature type="helix" evidence="15">
    <location>
        <begin position="1570"/>
        <end position="1575"/>
    </location>
</feature>
<organism>
    <name type="scientific">Mus musculus</name>
    <name type="common">Mouse</name>
    <dbReference type="NCBI Taxonomy" id="10090"/>
    <lineage>
        <taxon>Eukaryota</taxon>
        <taxon>Metazoa</taxon>
        <taxon>Chordata</taxon>
        <taxon>Craniata</taxon>
        <taxon>Vertebrata</taxon>
        <taxon>Euteleostomi</taxon>
        <taxon>Mammalia</taxon>
        <taxon>Eutheria</taxon>
        <taxon>Euarchontoglires</taxon>
        <taxon>Glires</taxon>
        <taxon>Rodentia</taxon>
        <taxon>Myomorpha</taxon>
        <taxon>Muroidea</taxon>
        <taxon>Muridae</taxon>
        <taxon>Murinae</taxon>
        <taxon>Mus</taxon>
        <taxon>Mus</taxon>
    </lineage>
</organism>
<sequence length="2113" mass="240859">MSVFRLGDHVWLDPPSSSKTGVAIGGIVKETKLGKTLIEDDEGKEHWVHAEDLSTLRPMHPNSAQGVDDMIRLGDLNEAGVVHNLLIRYQQHKIYTYTGSILVAVNPFQMLPLYTLEQVQIYYSRHMGELPPHIFAIANSCYFNMKKNKRDQCCIISGESGAGKTETTKLILQFLATVSGQHSWIEQQVLEANPILEAFGNAKTIRNDNSSRFGKYIDIHFNSSGVIEGASIEHFLLEKSRVCRQAPEERNYHIFYCMLMGMSPEEKQMLSLGMPSEYHYLTMGSCTSSEGLSDAKDYAHVRSAMKILQFSDSENWDISKLLAAILHLGNVGFMAAVFENLDSSDVMETPAFPLAMKLLEVQHQALRDCLIKHTIPVLGEFVSRPVNIAQATDRRDAFVKGIYGRLFQWIVKKINAAIFTPQAQDPQNVRRAIGLLDIFGFENFQNNSFEQLCINFANEHLQQFFVKHVFTMEQEEYLSENITWNYIHYTDNQPILDMLALKPMSIISLLDEESRFPQGTDVTMLQKLNSIHANNKSFLSPRSIHDTRFGIAHFAGDVYYQAEGFLEKNRDVLSTDILILIHSSKNKFLKEIFNVDSSQTKLGHGTICQVKAGSQLFKSSDSIKRPVTLASQFKQSLDQLMRILTNCQPYFVRCIKPNEYKKPLLFDRELCIQQLRYSGMMETVHIRKSGFPIRYTFDEFSQRFRVLLPSPERMQFQNKPRQMTLHIADLCLGTDKDWKVGKTKIFLKDHQDTVLEIRRSQALDGAAIRIQRVLRGHKYRKEFLRQRRAAVTLQAGWRGYSQRKNFKLILVGFERLQAIARSHLLMRQFQAMRQRIVQLQARCRGYLVRQQVQAKRRAVVIIQAHARGMVVRKSYWQQKSTGPQVILAKEPKAQVAVHERKRKSIYDTVTDTAMVEKVFGFLPAMIGGQEGPAPTRFEDLEVKTQKLHEVDLDTVPMMAMPEEEVDSLAEYTFPKFAVTYFQKSASHTHIQKPLRYPLLYHENDTDHSAALDVWIIILRFMGDLPEPVVYGRNSLTGSSVMRQIHDKLGKDSVTQHNRSSQVASQLNFGEEAFKFDGPISDRPMSNLEKVHFIVGYAIMRPGLRDEIYCQICKQLSENYKTSSRARGWILLSLCLGCFPPSERFMKYLLNFISQGPPSYGPFCAERLQRTFANGVRAEPPTWLELQAVKSKKHIPIQVILATGRSLTISVDSASTSREICQHVAQKQGLRDNLGFSLQVAVYDKFWSLGSGCDHLMDAVAQCEQLARERGESQRQAPWRIYFRKEFFTPWHDSQEDPVSTELIYHQVLRGVWSGEYNFEKEEELVELLARHCYVQLGATVKSNAVQELLPSCVPSKLYRTKSPEKWASLVTAAHAKAQYTQSKATPLAVREQTVEAARLLWPLLFSRLFEVTTLSGPRLPKTQLVLAINWKGMYFLDQKERTLLGLSFAEVMGLVANRDAPGGKKLLLATLQEEYEFVSPSSVAIAEMVALFLGGLKERSVFAMALQDRRATDDITLLPFKKGDLLILTKKQGLLASENWALGQNDRTGKTGLVPTACLYTIPSVTKPSTQLLSLLAMSPEKRKLAAQEVRALEPPLEDQLTESPYTLEEFSYQFFRAPEKETISRAAMPMARSRGHLWAYSPEPLRQPLLKSVHDKAKLRDAACQIFLAILKYTGDYPSRQSWHSLELTDQMFSLALQDPALQDELYCQILKQLTHNSIRFSEERAWQLLWLCTGLFPPGKTLLPHAQKFIDSRKKKPLALDCSRRLHRVLRVGPRKQPPHDVEVKAAEQNVSKLHHEVYLPNDTSKSMEVGSSSRVRDLCEGIGTRLQLASWDGCSLFIKITDKVISLKEGDFFFDSLRQVSDWVKKNRPQKEGASVTLPYQVFFMRKLWLNVTPGKDVNADTILHYHQELPKYLRGFHKCSREDAIHLGGLICKIQFGSDSSQLASVSKVLKELVPQNLTRLMSSEEWKKSLLLECDKNKRKTVAEAKVEFLKYMYRWPTFGSAFFEVKQTSEPSYPDILLIAINRHGLLLIHPKTKELLNTYPFTKISSWSSGNTYFHMALGSLGQGSRLLCETSLGYKMDDLLTSYVQQLLNTVNKQRGFRAPAPANP</sequence>
<reference key="1">
    <citation type="journal article" date="2001" name="Genomics">
        <title>Myosin-VIIb, a novel unconventional myosin, is a constituent of microvilli in transporting epithelia.</title>
        <authorList>
            <person name="Chen Z.-Y."/>
            <person name="Hasson T."/>
            <person name="Zhang D.-S."/>
            <person name="Schwender B.J."/>
            <person name="Derfler B.H."/>
            <person name="Mooseker M.S."/>
            <person name="Corey D.P."/>
        </authorList>
    </citation>
    <scope>NUCLEOTIDE SEQUENCE [MRNA]</scope>
    <scope>DEVELOPMENTAL STAGE</scope>
    <scope>TISSUE SPECIFICITY</scope>
    <scope>SUBCELLULAR LOCATION</scope>
    <source>
        <tissue>Inner ear</tissue>
        <tissue>Kidney</tissue>
    </source>
</reference>
<reference key="2">
    <citation type="journal article" date="2004" name="Genome Res.">
        <title>The status, quality, and expansion of the NIH full-length cDNA project: the Mammalian Gene Collection (MGC).</title>
        <authorList>
            <consortium name="The MGC Project Team"/>
        </authorList>
    </citation>
    <scope>NUCLEOTIDE SEQUENCE [LARGE SCALE MRNA]</scope>
    <source>
        <strain>FVB/N</strain>
        <tissue>Colon</tissue>
    </source>
</reference>
<reference key="3">
    <citation type="submission" date="2005-02" db="EMBL/GenBank/DDBJ databases">
        <title>Prediction of the coding sequences of mouse homologues of KIAA gene. The complete nucleotide sequences of mouse KIAA-homologous cDNAs identified by screening of terminal sequences of cDNA clones randomly sampled from size-fractionated libraries.</title>
        <authorList>
            <person name="Okazaki N."/>
            <person name="Kikuno R.F."/>
            <person name="Ohara R."/>
            <person name="Inamoto S."/>
            <person name="Nagase T."/>
            <person name="Ohara O."/>
            <person name="Koga H."/>
        </authorList>
    </citation>
    <scope>NUCLEOTIDE SEQUENCE [LARGE SCALE MRNA] OF 1114-2113</scope>
    <source>
        <tissue>Embryonic intestine</tissue>
    </source>
</reference>
<reference key="4">
    <citation type="journal article" date="2010" name="Cell">
        <title>A tissue-specific atlas of mouse protein phosphorylation and expression.</title>
        <authorList>
            <person name="Huttlin E.L."/>
            <person name="Jedrychowski M.P."/>
            <person name="Elias J.E."/>
            <person name="Goswami T."/>
            <person name="Rad R."/>
            <person name="Beausoleil S.A."/>
            <person name="Villen J."/>
            <person name="Haas W."/>
            <person name="Sowa M.E."/>
            <person name="Gygi S.P."/>
        </authorList>
    </citation>
    <scope>PHOSPHORYLATION [LARGE SCALE ANALYSIS] AT SER-904; THR-1339; SER-1368 AND SER-1642</scope>
    <scope>IDENTIFICATION BY MASS SPECTROMETRY [LARGE SCALE ANALYSIS]</scope>
    <source>
        <tissue>Kidney</tissue>
    </source>
</reference>
<reference key="5">
    <citation type="journal article" date="2014" name="Cell">
        <title>Intestinal brush border assembly driven by protocadherin-based intermicrovillar adhesion.</title>
        <authorList>
            <person name="Crawley S.W."/>
            <person name="Shifrin D.A. Jr."/>
            <person name="Grega-Larson N.E."/>
            <person name="McConnell R.E."/>
            <person name="Benesh A.E."/>
            <person name="Mao S."/>
            <person name="Zheng Y."/>
            <person name="Zheng Q.Y."/>
            <person name="Nam K.T."/>
            <person name="Millis B.A."/>
            <person name="Kachar B."/>
            <person name="Tyska M.J."/>
        </authorList>
    </citation>
    <scope>SUBCELLULAR LOCATION</scope>
    <scope>TISSUE SPECIFICITY</scope>
</reference>
<reference key="6">
    <citation type="journal article" date="2020" name="J. Biol. Chem.">
        <title>The small EF-hand protein CALML4 functions as a critical myosin light chain within the intermicrovillar adhesion complex.</title>
        <authorList>
            <person name="Choi M.S."/>
            <person name="Graves M.J."/>
            <person name="Matoo S."/>
            <person name="Storad Z.A."/>
            <person name="El Sheikh Idris R.A."/>
            <person name="Weck M.L."/>
            <person name="Smith Z.B."/>
            <person name="Tyska M.J."/>
            <person name="Crawley S.W."/>
        </authorList>
    </citation>
    <scope>SUBCELLULAR LOCATION</scope>
</reference>
<reference key="7">
    <citation type="journal article" date="2016" name="Dev. Cell">
        <title>Mechanistic basis of organization of the Harmonin/USH1C-mediated brush border microvilli tip-link complex.</title>
        <authorList>
            <person name="Li J."/>
            <person name="He Y."/>
            <person name="Lu Q."/>
            <person name="Zhang M."/>
        </authorList>
    </citation>
    <scope>X-RAY CRYSTALLOGRAPHY (3.4 ANGSTROMS) OF 962-1578 IN COMPLEX WITH ANKS4B</scope>
    <scope>REGION</scope>
</reference>
<proteinExistence type="evidence at protein level"/>
<dbReference type="EMBL" id="AF242411">
    <property type="protein sequence ID" value="AAK28339.1"/>
    <property type="molecule type" value="mRNA"/>
</dbReference>
<dbReference type="EMBL" id="BC138338">
    <property type="protein sequence ID" value="AAI38339.1"/>
    <property type="molecule type" value="mRNA"/>
</dbReference>
<dbReference type="EMBL" id="BC138341">
    <property type="protein sequence ID" value="AAI38342.1"/>
    <property type="molecule type" value="mRNA"/>
</dbReference>
<dbReference type="EMBL" id="BC026416">
    <property type="protein sequence ID" value="AAH26416.1"/>
    <property type="molecule type" value="mRNA"/>
</dbReference>
<dbReference type="EMBL" id="AK220152">
    <property type="protein sequence ID" value="BAD90338.1"/>
    <property type="molecule type" value="mRNA"/>
</dbReference>
<dbReference type="CCDS" id="CCDS50244.1"/>
<dbReference type="RefSeq" id="NP_115770.2">
    <property type="nucleotide sequence ID" value="NM_032394.3"/>
</dbReference>
<dbReference type="PDB" id="5F3Y">
    <property type="method" value="X-ray"/>
    <property type="resolution" value="3.41 A"/>
    <property type="chains" value="A=962-1578"/>
</dbReference>
<dbReference type="PDBsum" id="5F3Y"/>
<dbReference type="SMR" id="Q99MZ6"/>
<dbReference type="FunCoup" id="Q99MZ6">
    <property type="interactions" value="7"/>
</dbReference>
<dbReference type="STRING" id="10090.ENSMUSP00000118046"/>
<dbReference type="GlyGen" id="Q99MZ6">
    <property type="glycosylation" value="2 sites, 1 O-linked glycan (1 site)"/>
</dbReference>
<dbReference type="iPTMnet" id="Q99MZ6"/>
<dbReference type="PhosphoSitePlus" id="Q99MZ6"/>
<dbReference type="SwissPalm" id="Q99MZ6"/>
<dbReference type="jPOST" id="Q99MZ6"/>
<dbReference type="PaxDb" id="10090-ENSMUSP00000118046"/>
<dbReference type="PeptideAtlas" id="Q99MZ6"/>
<dbReference type="ProteomicsDB" id="286131"/>
<dbReference type="Antibodypedia" id="47564">
    <property type="antibodies" value="26 antibodies from 16 providers"/>
</dbReference>
<dbReference type="DNASU" id="17922"/>
<dbReference type="Ensembl" id="ENSMUST00000134663.2">
    <property type="protein sequence ID" value="ENSMUSP00000118046.2"/>
    <property type="gene ID" value="ENSMUSG00000024388.12"/>
</dbReference>
<dbReference type="GeneID" id="17922"/>
<dbReference type="KEGG" id="mmu:17922"/>
<dbReference type="UCSC" id="uc008eix.2">
    <property type="organism name" value="mouse"/>
</dbReference>
<dbReference type="AGR" id="MGI:107709"/>
<dbReference type="CTD" id="4648"/>
<dbReference type="MGI" id="MGI:107709">
    <property type="gene designation" value="Myo7b"/>
</dbReference>
<dbReference type="VEuPathDB" id="HostDB:ENSMUSG00000024388"/>
<dbReference type="eggNOG" id="KOG4229">
    <property type="taxonomic scope" value="Eukaryota"/>
</dbReference>
<dbReference type="GeneTree" id="ENSGT00940000157247"/>
<dbReference type="HOGENOM" id="CLU_000192_14_1_1"/>
<dbReference type="InParanoid" id="Q99MZ6"/>
<dbReference type="OMA" id="MYEKVWA"/>
<dbReference type="OrthoDB" id="6108017at2759"/>
<dbReference type="PhylomeDB" id="Q99MZ6"/>
<dbReference type="TreeFam" id="TF335306"/>
<dbReference type="BioGRID-ORCS" id="17922">
    <property type="hits" value="5 hits in 77 CRISPR screens"/>
</dbReference>
<dbReference type="EvolutionaryTrace" id="Q99MZ6"/>
<dbReference type="PRO" id="PR:Q99MZ6"/>
<dbReference type="Proteomes" id="UP000000589">
    <property type="component" value="Chromosome 18"/>
</dbReference>
<dbReference type="RNAct" id="Q99MZ6">
    <property type="molecule type" value="protein"/>
</dbReference>
<dbReference type="Bgee" id="ENSMUSG00000024388">
    <property type="expression patterns" value="Expressed in intestinal villus and 48 other cell types or tissues"/>
</dbReference>
<dbReference type="GO" id="GO:0090651">
    <property type="term" value="C:apical cytoplasm"/>
    <property type="evidence" value="ECO:0000314"/>
    <property type="project" value="UniProtKB"/>
</dbReference>
<dbReference type="GO" id="GO:0005903">
    <property type="term" value="C:brush border"/>
    <property type="evidence" value="ECO:0000314"/>
    <property type="project" value="UniProtKB"/>
</dbReference>
<dbReference type="GO" id="GO:0005902">
    <property type="term" value="C:microvillus"/>
    <property type="evidence" value="ECO:0000314"/>
    <property type="project" value="UniProtKB"/>
</dbReference>
<dbReference type="GO" id="GO:0016459">
    <property type="term" value="C:myosin complex"/>
    <property type="evidence" value="ECO:0007669"/>
    <property type="project" value="UniProtKB-KW"/>
</dbReference>
<dbReference type="GO" id="GO:0003779">
    <property type="term" value="F:actin binding"/>
    <property type="evidence" value="ECO:0007669"/>
    <property type="project" value="UniProtKB-KW"/>
</dbReference>
<dbReference type="GO" id="GO:0005524">
    <property type="term" value="F:ATP binding"/>
    <property type="evidence" value="ECO:0007669"/>
    <property type="project" value="UniProtKB-KW"/>
</dbReference>
<dbReference type="GO" id="GO:0003774">
    <property type="term" value="F:cytoskeletal motor activity"/>
    <property type="evidence" value="ECO:0007669"/>
    <property type="project" value="InterPro"/>
</dbReference>
<dbReference type="GO" id="GO:1904970">
    <property type="term" value="P:brush border assembly"/>
    <property type="evidence" value="ECO:0000250"/>
    <property type="project" value="UniProtKB"/>
</dbReference>
<dbReference type="GO" id="GO:0030154">
    <property type="term" value="P:cell differentiation"/>
    <property type="evidence" value="ECO:0007669"/>
    <property type="project" value="UniProtKB-KW"/>
</dbReference>
<dbReference type="CDD" id="cd17092">
    <property type="entry name" value="FERM1_F1_Myosin-VII"/>
    <property type="match status" value="1"/>
</dbReference>
<dbReference type="CDD" id="cd17093">
    <property type="entry name" value="FERM2_F1_Myosin-VII"/>
    <property type="match status" value="1"/>
</dbReference>
<dbReference type="CDD" id="cd14473">
    <property type="entry name" value="FERM_B-lobe"/>
    <property type="match status" value="2"/>
</dbReference>
<dbReference type="CDD" id="cd13198">
    <property type="entry name" value="FERM_C1_MyoVII"/>
    <property type="match status" value="1"/>
</dbReference>
<dbReference type="CDD" id="cd13199">
    <property type="entry name" value="FERM_C2_MyoVII"/>
    <property type="match status" value="1"/>
</dbReference>
<dbReference type="CDD" id="cd23767">
    <property type="entry name" value="IQCD"/>
    <property type="match status" value="2"/>
</dbReference>
<dbReference type="CDD" id="cd01381">
    <property type="entry name" value="MYSc_Myo7"/>
    <property type="match status" value="1"/>
</dbReference>
<dbReference type="FunFam" id="1.25.40.530:FF:000006">
    <property type="entry name" value="MYO7B isoform 7"/>
    <property type="match status" value="1"/>
</dbReference>
<dbReference type="FunFam" id="1.10.10.820:FF:000001">
    <property type="entry name" value="Myosin heavy chain"/>
    <property type="match status" value="1"/>
</dbReference>
<dbReference type="FunFam" id="1.20.80.10:FF:000012">
    <property type="entry name" value="Myosin VIIA"/>
    <property type="match status" value="1"/>
</dbReference>
<dbReference type="FunFam" id="1.20.80.10:FF:000013">
    <property type="entry name" value="Unconventional myosin-VIIa"/>
    <property type="match status" value="1"/>
</dbReference>
<dbReference type="Gene3D" id="1.10.10.820">
    <property type="match status" value="1"/>
</dbReference>
<dbReference type="Gene3D" id="1.20.5.190">
    <property type="match status" value="2"/>
</dbReference>
<dbReference type="Gene3D" id="1.20.58.530">
    <property type="match status" value="1"/>
</dbReference>
<dbReference type="Gene3D" id="1.20.80.10">
    <property type="match status" value="2"/>
</dbReference>
<dbReference type="Gene3D" id="6.20.240.20">
    <property type="match status" value="1"/>
</dbReference>
<dbReference type="Gene3D" id="3.40.850.10">
    <property type="entry name" value="Kinesin motor domain"/>
    <property type="match status" value="1"/>
</dbReference>
<dbReference type="Gene3D" id="1.20.120.720">
    <property type="entry name" value="Myosin VI head, motor domain, U50 subdomain"/>
    <property type="match status" value="1"/>
</dbReference>
<dbReference type="Gene3D" id="1.25.40.530">
    <property type="entry name" value="MyTH4 domain"/>
    <property type="match status" value="3"/>
</dbReference>
<dbReference type="Gene3D" id="3.10.20.90">
    <property type="entry name" value="Phosphatidylinositol 3-kinase Catalytic Subunit, Chain A, domain 1"/>
    <property type="match status" value="2"/>
</dbReference>
<dbReference type="Gene3D" id="2.30.29.30">
    <property type="entry name" value="Pleckstrin-homology domain (PH domain)/Phosphotyrosine-binding domain (PTB)"/>
    <property type="match status" value="2"/>
</dbReference>
<dbReference type="Gene3D" id="2.30.30.40">
    <property type="entry name" value="SH3 Domains"/>
    <property type="match status" value="1"/>
</dbReference>
<dbReference type="InterPro" id="IPR019749">
    <property type="entry name" value="Band_41_domain"/>
</dbReference>
<dbReference type="InterPro" id="IPR014352">
    <property type="entry name" value="FERM/acyl-CoA-bd_prot_sf"/>
</dbReference>
<dbReference type="InterPro" id="IPR035963">
    <property type="entry name" value="FERM_2"/>
</dbReference>
<dbReference type="InterPro" id="IPR019748">
    <property type="entry name" value="FERM_central"/>
</dbReference>
<dbReference type="InterPro" id="IPR000299">
    <property type="entry name" value="FERM_domain"/>
</dbReference>
<dbReference type="InterPro" id="IPR000048">
    <property type="entry name" value="IQ_motif_EF-hand-BS"/>
</dbReference>
<dbReference type="InterPro" id="IPR002404">
    <property type="entry name" value="IRS_PTB"/>
</dbReference>
<dbReference type="InterPro" id="IPR036961">
    <property type="entry name" value="Kinesin_motor_dom_sf"/>
</dbReference>
<dbReference type="InterPro" id="IPR001609">
    <property type="entry name" value="Myosin_head_motor_dom-like"/>
</dbReference>
<dbReference type="InterPro" id="IPR041793">
    <property type="entry name" value="MyoVII_FERM_C1"/>
</dbReference>
<dbReference type="InterPro" id="IPR041794">
    <property type="entry name" value="MyoVII_FERM_C2"/>
</dbReference>
<dbReference type="InterPro" id="IPR036106">
    <property type="entry name" value="MYSc_Myo7"/>
</dbReference>
<dbReference type="InterPro" id="IPR000857">
    <property type="entry name" value="MyTH4_dom"/>
</dbReference>
<dbReference type="InterPro" id="IPR038185">
    <property type="entry name" value="MyTH4_dom_sf"/>
</dbReference>
<dbReference type="InterPro" id="IPR027417">
    <property type="entry name" value="P-loop_NTPase"/>
</dbReference>
<dbReference type="InterPro" id="IPR011993">
    <property type="entry name" value="PH-like_dom_sf"/>
</dbReference>
<dbReference type="InterPro" id="IPR036028">
    <property type="entry name" value="SH3-like_dom_sf"/>
</dbReference>
<dbReference type="InterPro" id="IPR001452">
    <property type="entry name" value="SH3_domain"/>
</dbReference>
<dbReference type="InterPro" id="IPR029071">
    <property type="entry name" value="Ubiquitin-like_domsf"/>
</dbReference>
<dbReference type="InterPro" id="IPR051567">
    <property type="entry name" value="Unconventional_Myosin_ATPase"/>
</dbReference>
<dbReference type="PANTHER" id="PTHR22692">
    <property type="entry name" value="MYOSIN VII, XV"/>
    <property type="match status" value="1"/>
</dbReference>
<dbReference type="PANTHER" id="PTHR22692:SF24">
    <property type="entry name" value="MYOSIN VIIB"/>
    <property type="match status" value="1"/>
</dbReference>
<dbReference type="Pfam" id="PF21998">
    <property type="entry name" value="FERM_C1_MyoVII"/>
    <property type="match status" value="1"/>
</dbReference>
<dbReference type="Pfam" id="PF00373">
    <property type="entry name" value="FERM_M"/>
    <property type="match status" value="1"/>
</dbReference>
<dbReference type="Pfam" id="PF00612">
    <property type="entry name" value="IQ"/>
    <property type="match status" value="4"/>
</dbReference>
<dbReference type="Pfam" id="PF02174">
    <property type="entry name" value="IRS"/>
    <property type="match status" value="1"/>
</dbReference>
<dbReference type="Pfam" id="PF00063">
    <property type="entry name" value="Myosin_head"/>
    <property type="match status" value="1"/>
</dbReference>
<dbReference type="Pfam" id="PF24123">
    <property type="entry name" value="Myosin_VII_N"/>
    <property type="match status" value="1"/>
</dbReference>
<dbReference type="Pfam" id="PF00784">
    <property type="entry name" value="MyTH4"/>
    <property type="match status" value="2"/>
</dbReference>
<dbReference type="Pfam" id="PF21989">
    <property type="entry name" value="RA_2"/>
    <property type="match status" value="2"/>
</dbReference>
<dbReference type="PRINTS" id="PR00193">
    <property type="entry name" value="MYOSINHEAVY"/>
</dbReference>
<dbReference type="SMART" id="SM00295">
    <property type="entry name" value="B41"/>
    <property type="match status" value="2"/>
</dbReference>
<dbReference type="SMART" id="SM00015">
    <property type="entry name" value="IQ"/>
    <property type="match status" value="4"/>
</dbReference>
<dbReference type="SMART" id="SM00242">
    <property type="entry name" value="MYSc"/>
    <property type="match status" value="1"/>
</dbReference>
<dbReference type="SMART" id="SM00139">
    <property type="entry name" value="MyTH4"/>
    <property type="match status" value="2"/>
</dbReference>
<dbReference type="SMART" id="SM00326">
    <property type="entry name" value="SH3"/>
    <property type="match status" value="1"/>
</dbReference>
<dbReference type="SUPFAM" id="SSF52540">
    <property type="entry name" value="P-loop containing nucleoside triphosphate hydrolases"/>
    <property type="match status" value="2"/>
</dbReference>
<dbReference type="SUPFAM" id="SSF50729">
    <property type="entry name" value="PH domain-like"/>
    <property type="match status" value="1"/>
</dbReference>
<dbReference type="SUPFAM" id="SSF47031">
    <property type="entry name" value="Second domain of FERM"/>
    <property type="match status" value="2"/>
</dbReference>
<dbReference type="SUPFAM" id="SSF50044">
    <property type="entry name" value="SH3-domain"/>
    <property type="match status" value="1"/>
</dbReference>
<dbReference type="SUPFAM" id="SSF54236">
    <property type="entry name" value="Ubiquitin-like"/>
    <property type="match status" value="2"/>
</dbReference>
<dbReference type="PROSITE" id="PS50057">
    <property type="entry name" value="FERM_3"/>
    <property type="match status" value="2"/>
</dbReference>
<dbReference type="PROSITE" id="PS50096">
    <property type="entry name" value="IQ"/>
    <property type="match status" value="4"/>
</dbReference>
<dbReference type="PROSITE" id="PS51456">
    <property type="entry name" value="MYOSIN_MOTOR"/>
    <property type="match status" value="1"/>
</dbReference>
<dbReference type="PROSITE" id="PS51016">
    <property type="entry name" value="MYTH4"/>
    <property type="match status" value="2"/>
</dbReference>
<dbReference type="PROSITE" id="PS50002">
    <property type="entry name" value="SH3"/>
    <property type="match status" value="1"/>
</dbReference>
<accession>Q99MZ6</accession>
<accession>B9EHR5</accession>
<accession>Q571N7</accession>
<accession>Q8R0U3</accession>
<comment type="function">
    <text evidence="1">Myosins are actin-based motor molecules with ATPase activity. Their highly divergent tails are presumed to bind to membranous compartments, which would be moved relative to actin filaments. As part of the intermicrovillar adhesion complex/IMAC plays a role in epithelial brush border differentiation, controlling microvilli organization and length. May link the complex to the actin core bundle of microvilli.</text>
</comment>
<comment type="subunit">
    <text evidence="1 13">Part of the IMAC/intermicrovillar adhesion complex/intermicrovillar tip-link complex composed of ANKS4B, MYO7B, USH1C, CDHR2 and CDHR5. Interacts with CDHR2. Interacts with CDHR5. Interacts with USH1C (By similarity). Interacts with ANKS4B; requires initial interaction with USH1C (Probable). Interacts with CALML4; the interaction mediates the association of CALML4 with the IMAC/intermicrovillar adhesion complex (By similarity).</text>
</comment>
<comment type="subcellular location">
    <subcellularLocation>
        <location evidence="12">Cytoplasm</location>
        <location evidence="12">Cytoskeleton</location>
    </subcellularLocation>
    <subcellularLocation>
        <location evidence="7 8 10">Cell projection</location>
        <location evidence="7 8 10">Microvillus</location>
    </subcellularLocation>
    <text evidence="7 8 10">Enriched in the microvilli of the intestinal brush border.</text>
</comment>
<comment type="tissue specificity">
    <text evidence="7 8">Expressed primarily in kidney and intestine. Detected in proximal tubule cells of the kidney and enterocytes of the intestine, specifically the distal tips of apical microvilli on these transporting epithelial cells (at protein level).</text>
</comment>
<comment type="developmental stage">
    <text evidence="7">Detected in intestinal enterocytes at embryonic day 17.</text>
</comment>
<comment type="similarity">
    <text evidence="11">Belongs to the TRAFAC class myosin-kinesin ATPase superfamily. Myosin family.</text>
</comment>
<comment type="caution">
    <text evidence="11">Represents an unconventional myosin. This protein should not be confused with the conventional myosin-7 (MYH7).</text>
</comment>
<keyword id="KW-0002">3D-structure</keyword>
<keyword id="KW-0009">Actin-binding</keyword>
<keyword id="KW-0067">ATP-binding</keyword>
<keyword id="KW-0966">Cell projection</keyword>
<keyword id="KW-0963">Cytoplasm</keyword>
<keyword id="KW-0206">Cytoskeleton</keyword>
<keyword id="KW-0221">Differentiation</keyword>
<keyword id="KW-0505">Motor protein</keyword>
<keyword id="KW-0518">Myosin</keyword>
<keyword id="KW-0547">Nucleotide-binding</keyword>
<keyword id="KW-0597">Phosphoprotein</keyword>
<keyword id="KW-1185">Reference proteome</keyword>
<keyword id="KW-0677">Repeat</keyword>
<keyword id="KW-0728">SH3 domain</keyword>
<evidence type="ECO:0000250" key="1">
    <source>
        <dbReference type="UniProtKB" id="Q6PIF6"/>
    </source>
</evidence>
<evidence type="ECO:0000255" key="2">
    <source>
        <dbReference type="PROSITE-ProRule" id="PRU00084"/>
    </source>
</evidence>
<evidence type="ECO:0000255" key="3">
    <source>
        <dbReference type="PROSITE-ProRule" id="PRU00116"/>
    </source>
</evidence>
<evidence type="ECO:0000255" key="4">
    <source>
        <dbReference type="PROSITE-ProRule" id="PRU00192"/>
    </source>
</evidence>
<evidence type="ECO:0000255" key="5">
    <source>
        <dbReference type="PROSITE-ProRule" id="PRU00359"/>
    </source>
</evidence>
<evidence type="ECO:0000255" key="6">
    <source>
        <dbReference type="PROSITE-ProRule" id="PRU00782"/>
    </source>
</evidence>
<evidence type="ECO:0000269" key="7">
    <source>
    </source>
</evidence>
<evidence type="ECO:0000269" key="8">
    <source>
    </source>
</evidence>
<evidence type="ECO:0000269" key="9">
    <source>
    </source>
</evidence>
<evidence type="ECO:0000269" key="10">
    <source>
    </source>
</evidence>
<evidence type="ECO:0000305" key="11"/>
<evidence type="ECO:0000305" key="12">
    <source>
    </source>
</evidence>
<evidence type="ECO:0000305" key="13">
    <source>
    </source>
</evidence>
<evidence type="ECO:0007744" key="14">
    <source>
    </source>
</evidence>
<evidence type="ECO:0007829" key="15">
    <source>
        <dbReference type="PDB" id="5F3Y"/>
    </source>
</evidence>
<name>MYO7B_MOUSE</name>
<protein>
    <recommendedName>
        <fullName>Unconventional myosin-VIIb</fullName>
    </recommendedName>
</protein>
<gene>
    <name type="primary">Myo7b</name>
</gene>